<sequence>MHSSKCPDLANIGRRRVLAGIALAMTTSSTRAQRLDAFPSRPITWVVPFPPGGAVDAIARIISRKMSESIGQQVVVDNRAGSGGIIGSDLVAKAPSDGHTILINSTGLVVDRFFYPRVPYQSDRDFVPVVLAATLPSVLVVPADSRFRDITQLLKAARENPGKLSFASAGLGTSIHLASALLAARANVELLHVPYRGSSPAVSDLVAGRVDMMIDSVTSQRQNILAKRVRALGVTSLDRHPQLPEVPTIAEAAGLPGFEVLTWCGVFAPKGTPRSVVERLNAEINKAIAAPDVVEALKQLGIKTAGGAPEVLADLFKSETERWQKLIVEYRLNANQ</sequence>
<organism>
    <name type="scientific">Pseudomonas sp. (strain P51)</name>
    <dbReference type="NCBI Taxonomy" id="65067"/>
    <lineage>
        <taxon>Bacteria</taxon>
        <taxon>Pseudomonadati</taxon>
        <taxon>Pseudomonadota</taxon>
        <taxon>Gammaproteobacteria</taxon>
        <taxon>Pseudomonadales</taxon>
        <taxon>Pseudomonadaceae</taxon>
        <taxon>Pseudomonas</taxon>
    </lineage>
</organism>
<keyword id="KW-0574">Periplasm</keyword>
<keyword id="KW-0614">Plasmid</keyword>
<keyword id="KW-0732">Signal</keyword>
<evidence type="ECO:0000255" key="1"/>
<evidence type="ECO:0000305" key="2"/>
<proteinExistence type="inferred from homology"/>
<accession>P27103</accession>
<geneLocation type="plasmid">
    <name>pP51</name>
</geneLocation>
<comment type="subcellular location">
    <subcellularLocation>
        <location evidence="2">Periplasm</location>
    </subcellularLocation>
</comment>
<comment type="similarity">
    <text evidence="2">Belongs to the UPF0065 (bug) family.</text>
</comment>
<protein>
    <recommendedName>
        <fullName>UPF0065 protein in tcbD-tcbE intergenic region</fullName>
    </recommendedName>
</protein>
<dbReference type="EMBL" id="M57629">
    <property type="protein sequence ID" value="AAD13627.1"/>
    <property type="molecule type" value="Genomic_DNA"/>
</dbReference>
<dbReference type="PIR" id="C43673">
    <property type="entry name" value="C43673"/>
</dbReference>
<dbReference type="SMR" id="P27103"/>
<dbReference type="GO" id="GO:0042597">
    <property type="term" value="C:periplasmic space"/>
    <property type="evidence" value="ECO:0007669"/>
    <property type="project" value="UniProtKB-SubCell"/>
</dbReference>
<dbReference type="CDD" id="cd13578">
    <property type="entry name" value="PBP2_Bug27"/>
    <property type="match status" value="1"/>
</dbReference>
<dbReference type="Gene3D" id="3.40.190.150">
    <property type="entry name" value="Bordetella uptake gene, domain 1"/>
    <property type="match status" value="1"/>
</dbReference>
<dbReference type="Gene3D" id="3.40.190.10">
    <property type="entry name" value="Periplasmic binding protein-like II"/>
    <property type="match status" value="1"/>
</dbReference>
<dbReference type="InterPro" id="IPR005064">
    <property type="entry name" value="BUG"/>
</dbReference>
<dbReference type="InterPro" id="IPR042100">
    <property type="entry name" value="Bug_dom1"/>
</dbReference>
<dbReference type="PANTHER" id="PTHR42928:SF5">
    <property type="entry name" value="BLR1237 PROTEIN"/>
    <property type="match status" value="1"/>
</dbReference>
<dbReference type="PANTHER" id="PTHR42928">
    <property type="entry name" value="TRICARBOXYLATE-BINDING PROTEIN"/>
    <property type="match status" value="1"/>
</dbReference>
<dbReference type="Pfam" id="PF03401">
    <property type="entry name" value="TctC"/>
    <property type="match status" value="1"/>
</dbReference>
<dbReference type="PIRSF" id="PIRSF017082">
    <property type="entry name" value="YflP"/>
    <property type="match status" value="1"/>
</dbReference>
<dbReference type="SUPFAM" id="SSF53850">
    <property type="entry name" value="Periplasmic binding protein-like II"/>
    <property type="match status" value="1"/>
</dbReference>
<name>YTCB_PSESQ</name>
<reference key="1">
    <citation type="journal article" date="1991" name="J. Bacteriol.">
        <title>Sequence analysis of the Pseudomonas sp. strain P51 tcb gene cluster, which encodes metabolism of chlorinated catechols: evidence for specialization of catechol 1,2-dioxygenases for chlorinated substrates.</title>
        <authorList>
            <person name="van der Meer J.R."/>
            <person name="Eggen R.I."/>
            <person name="Zehnder A.J."/>
            <person name="de Vos W.M."/>
        </authorList>
    </citation>
    <scope>NUCLEOTIDE SEQUENCE [GENOMIC DNA]</scope>
</reference>
<feature type="signal peptide" evidence="1">
    <location>
        <begin position="1"/>
        <end position="32"/>
    </location>
</feature>
<feature type="chain" id="PRO_0000036201" description="UPF0065 protein in tcbD-tcbE intergenic region">
    <location>
        <begin position="33"/>
        <end position="336"/>
    </location>
</feature>